<name>CB60A_ARATH</name>
<comment type="function">
    <text evidence="1">Transcription activator that binds DNA in a sequence-specific manner, likely 5'-GAAATTTTGG-3', to promote the expression of target genes.</text>
</comment>
<comment type="subunit">
    <text evidence="1">Interacts with calmodulin (CaM).</text>
</comment>
<comment type="subcellular location">
    <subcellularLocation>
        <location evidence="2">Nucleus</location>
    </subcellularLocation>
</comment>
<comment type="alternative products">
    <event type="alternative splicing"/>
    <isoform>
        <id>C0SVV6-1</id>
        <name>1</name>
        <sequence type="displayed"/>
    </isoform>
    <isoform>
        <id>C0SVV6-2</id>
        <name>2</name>
        <sequence type="described" ref="VSP_057662"/>
    </isoform>
</comment>
<comment type="tissue specificity">
    <text evidence="3">Expressed in stems, flowers and root.</text>
</comment>
<comment type="similarity">
    <text evidence="5">Belongs to the plant ACBP60 protein family.</text>
</comment>
<comment type="sequence caution" evidence="5">
    <conflict type="erroneous initiation">
        <sequence resource="EMBL-CDS" id="AAM91175"/>
    </conflict>
    <text>Truncated N-terminus.</text>
</comment>
<comment type="sequence caution" evidence="5">
    <conflict type="erroneous gene model prediction">
        <sequence resource="EMBL-CDS" id="BAB11507"/>
    </conflict>
</comment>
<reference key="1">
    <citation type="journal article" date="1998" name="DNA Res.">
        <title>Structural analysis of Arabidopsis thaliana chromosome 5. VII. Sequence features of the regions of 1,013,767 bp covered by sixteen physically assigned P1 and TAC clones.</title>
        <authorList>
            <person name="Nakamura Y."/>
            <person name="Sato S."/>
            <person name="Asamizu E."/>
            <person name="Kaneko T."/>
            <person name="Kotani H."/>
            <person name="Miyajima N."/>
            <person name="Tabata S."/>
        </authorList>
    </citation>
    <scope>NUCLEOTIDE SEQUENCE [LARGE SCALE GENOMIC DNA]</scope>
    <source>
        <strain>cv. Columbia</strain>
    </source>
</reference>
<reference key="2">
    <citation type="journal article" date="2017" name="Plant J.">
        <title>Araport11: a complete reannotation of the Arabidopsis thaliana reference genome.</title>
        <authorList>
            <person name="Cheng C.Y."/>
            <person name="Krishnakumar V."/>
            <person name="Chan A.P."/>
            <person name="Thibaud-Nissen F."/>
            <person name="Schobel S."/>
            <person name="Town C.D."/>
        </authorList>
    </citation>
    <scope>GENOME REANNOTATION</scope>
    <source>
        <strain>cv. Columbia</strain>
    </source>
</reference>
<reference key="3">
    <citation type="submission" date="2009-03" db="EMBL/GenBank/DDBJ databases">
        <title>ORF cloning and analysis of Arabidopsis transcription factor genes.</title>
        <authorList>
            <person name="Fujita M."/>
            <person name="Mizukado S."/>
            <person name="Seki M."/>
            <person name="Shinozaki K."/>
            <person name="Mitsuda N."/>
            <person name="Takiguchi Y."/>
            <person name="Takagi M."/>
        </authorList>
    </citation>
    <scope>NUCLEOTIDE SEQUENCE [LARGE SCALE MRNA] (ISOFORM 1)</scope>
</reference>
<reference key="4">
    <citation type="journal article" date="2003" name="Science">
        <title>Empirical analysis of transcriptional activity in the Arabidopsis genome.</title>
        <authorList>
            <person name="Yamada K."/>
            <person name="Lim J."/>
            <person name="Dale J.M."/>
            <person name="Chen H."/>
            <person name="Shinn P."/>
            <person name="Palm C.J."/>
            <person name="Southwick A.M."/>
            <person name="Wu H.C."/>
            <person name="Kim C.J."/>
            <person name="Nguyen M."/>
            <person name="Pham P.K."/>
            <person name="Cheuk R.F."/>
            <person name="Karlin-Newmann G."/>
            <person name="Liu S.X."/>
            <person name="Lam B."/>
            <person name="Sakano H."/>
            <person name="Wu T."/>
            <person name="Yu G."/>
            <person name="Miranda M."/>
            <person name="Quach H.L."/>
            <person name="Tripp M."/>
            <person name="Chang C.H."/>
            <person name="Lee J.M."/>
            <person name="Toriumi M.J."/>
            <person name="Chan M.M."/>
            <person name="Tang C.C."/>
            <person name="Onodera C.S."/>
            <person name="Deng J.M."/>
            <person name="Akiyama K."/>
            <person name="Ansari Y."/>
            <person name="Arakawa T."/>
            <person name="Banh J."/>
            <person name="Banno F."/>
            <person name="Bowser L."/>
            <person name="Brooks S.Y."/>
            <person name="Carninci P."/>
            <person name="Chao Q."/>
            <person name="Choy N."/>
            <person name="Enju A."/>
            <person name="Goldsmith A.D."/>
            <person name="Gurjal M."/>
            <person name="Hansen N.F."/>
            <person name="Hayashizaki Y."/>
            <person name="Johnson-Hopson C."/>
            <person name="Hsuan V.W."/>
            <person name="Iida K."/>
            <person name="Karnes M."/>
            <person name="Khan S."/>
            <person name="Koesema E."/>
            <person name="Ishida J."/>
            <person name="Jiang P.X."/>
            <person name="Jones T."/>
            <person name="Kawai J."/>
            <person name="Kamiya A."/>
            <person name="Meyers C."/>
            <person name="Nakajima M."/>
            <person name="Narusaka M."/>
            <person name="Seki M."/>
            <person name="Sakurai T."/>
            <person name="Satou M."/>
            <person name="Tamse R."/>
            <person name="Vaysberg M."/>
            <person name="Wallender E.K."/>
            <person name="Wong C."/>
            <person name="Yamamura Y."/>
            <person name="Yuan S."/>
            <person name="Shinozaki K."/>
            <person name="Davis R.W."/>
            <person name="Theologis A."/>
            <person name="Ecker J.R."/>
        </authorList>
    </citation>
    <scope>NUCLEOTIDE SEQUENCE [LARGE SCALE MRNA] OF 136-494 (ISOFORM 1/2)</scope>
    <source>
        <strain>cv. Columbia</strain>
    </source>
</reference>
<reference key="5">
    <citation type="journal article" date="2002" name="J. Biol. Chem.">
        <title>Genes encoding calmodulin-binding proteins in the Arabidopsis genome.</title>
        <authorList>
            <person name="Reddy V.S."/>
            <person name="Ali G.S."/>
            <person name="Reddy A.S.N."/>
        </authorList>
    </citation>
    <scope>TISSUE SPECIFICITY</scope>
    <scope>GENE FAMILY</scope>
    <scope>NOMENCLATURE</scope>
</reference>
<gene>
    <name evidence="4" type="primary">CBP60A</name>
    <name evidence="6" type="ordered locus">At5g62570</name>
    <name evidence="7" type="ORF">K19B1.18</name>
</gene>
<evidence type="ECO:0000250" key="1">
    <source>
        <dbReference type="UniProtKB" id="F4K2R6"/>
    </source>
</evidence>
<evidence type="ECO:0000250" key="2">
    <source>
        <dbReference type="UniProtKB" id="Q9C9T2"/>
    </source>
</evidence>
<evidence type="ECO:0000269" key="3">
    <source>
    </source>
</evidence>
<evidence type="ECO:0000303" key="4">
    <source>
    </source>
</evidence>
<evidence type="ECO:0000305" key="5"/>
<evidence type="ECO:0000312" key="6">
    <source>
        <dbReference type="Araport" id="AT5G62570"/>
    </source>
</evidence>
<evidence type="ECO:0000312" key="7">
    <source>
        <dbReference type="EMBL" id="BAB11507.1"/>
    </source>
</evidence>
<evidence type="ECO:0000312" key="8">
    <source>
        <dbReference type="EMBL" id="BAH30647.1"/>
    </source>
</evidence>
<dbReference type="EMBL" id="AB015469">
    <property type="protein sequence ID" value="BAB11507.1"/>
    <property type="status" value="ALT_SEQ"/>
    <property type="molecule type" value="Genomic_DNA"/>
</dbReference>
<dbReference type="EMBL" id="CP002688">
    <property type="protein sequence ID" value="AED97624.1"/>
    <property type="molecule type" value="Genomic_DNA"/>
</dbReference>
<dbReference type="EMBL" id="AB493809">
    <property type="protein sequence ID" value="BAH30647.1"/>
    <property type="molecule type" value="mRNA"/>
</dbReference>
<dbReference type="EMBL" id="AY128775">
    <property type="protein sequence ID" value="AAM91175.1"/>
    <property type="status" value="ALT_INIT"/>
    <property type="molecule type" value="mRNA"/>
</dbReference>
<dbReference type="EMBL" id="AY093097">
    <property type="protein sequence ID" value="AAM13096.1"/>
    <property type="molecule type" value="mRNA"/>
</dbReference>
<dbReference type="RefSeq" id="NP_001190597.1">
    <molecule id="C0SVV6-1"/>
    <property type="nucleotide sequence ID" value="NM_001203668.2"/>
</dbReference>
<dbReference type="FunCoup" id="C0SVV6">
    <property type="interactions" value="161"/>
</dbReference>
<dbReference type="STRING" id="3702.C0SVV6"/>
<dbReference type="PaxDb" id="3702-AT5G62570.2"/>
<dbReference type="ProteomicsDB" id="240289">
    <molecule id="C0SVV6-1"/>
</dbReference>
<dbReference type="DNASU" id="836377"/>
<dbReference type="EnsemblPlants" id="AT5G62570.2">
    <molecule id="C0SVV6-1"/>
    <property type="protein sequence ID" value="AT5G62570.2"/>
    <property type="gene ID" value="AT5G62570"/>
</dbReference>
<dbReference type="GeneID" id="836377"/>
<dbReference type="Gramene" id="AT5G62570.2">
    <molecule id="C0SVV6-1"/>
    <property type="protein sequence ID" value="AT5G62570.2"/>
    <property type="gene ID" value="AT5G62570"/>
</dbReference>
<dbReference type="KEGG" id="ath:AT5G62570"/>
<dbReference type="Araport" id="AT5G62570"/>
<dbReference type="TAIR" id="AT5G62570">
    <property type="gene designation" value="CBP60A"/>
</dbReference>
<dbReference type="eggNOG" id="ENOG502QRWC">
    <property type="taxonomic scope" value="Eukaryota"/>
</dbReference>
<dbReference type="InParanoid" id="C0SVV6"/>
<dbReference type="OrthoDB" id="1604062at2759"/>
<dbReference type="PRO" id="PR:C0SVV6"/>
<dbReference type="Proteomes" id="UP000006548">
    <property type="component" value="Chromosome 5"/>
</dbReference>
<dbReference type="ExpressionAtlas" id="C0SVV6">
    <property type="expression patterns" value="baseline and differential"/>
</dbReference>
<dbReference type="GO" id="GO:0005634">
    <property type="term" value="C:nucleus"/>
    <property type="evidence" value="ECO:0007669"/>
    <property type="project" value="UniProtKB-SubCell"/>
</dbReference>
<dbReference type="GO" id="GO:0005516">
    <property type="term" value="F:calmodulin binding"/>
    <property type="evidence" value="ECO:0000314"/>
    <property type="project" value="TAIR"/>
</dbReference>
<dbReference type="GO" id="GO:0003677">
    <property type="term" value="F:DNA binding"/>
    <property type="evidence" value="ECO:0007669"/>
    <property type="project" value="UniProtKB-KW"/>
</dbReference>
<dbReference type="GO" id="GO:1900425">
    <property type="term" value="P:negative regulation of defense response to bacterium"/>
    <property type="evidence" value="ECO:0000315"/>
    <property type="project" value="TAIR"/>
</dbReference>
<dbReference type="InterPro" id="IPR046829">
    <property type="entry name" value="Calmod_bind_C"/>
</dbReference>
<dbReference type="InterPro" id="IPR046830">
    <property type="entry name" value="Calmod_bind_M"/>
</dbReference>
<dbReference type="InterPro" id="IPR046831">
    <property type="entry name" value="Calmodulin_bind_N"/>
</dbReference>
<dbReference type="InterPro" id="IPR012416">
    <property type="entry name" value="CBP60"/>
</dbReference>
<dbReference type="PANTHER" id="PTHR31713:SF14">
    <property type="entry name" value="CALMODULIN-BINDING PROTEIN 60 A"/>
    <property type="match status" value="1"/>
</dbReference>
<dbReference type="PANTHER" id="PTHR31713">
    <property type="entry name" value="OS02G0177800 PROTEIN"/>
    <property type="match status" value="1"/>
</dbReference>
<dbReference type="Pfam" id="PF20452">
    <property type="entry name" value="Calmod_bind_C"/>
    <property type="match status" value="1"/>
</dbReference>
<dbReference type="Pfam" id="PF20451">
    <property type="entry name" value="Calmod_bind_M"/>
    <property type="match status" value="1"/>
</dbReference>
<dbReference type="Pfam" id="PF07887">
    <property type="entry name" value="Calmodulin_bind"/>
    <property type="match status" value="1"/>
</dbReference>
<protein>
    <recommendedName>
        <fullName evidence="4">Calmodulin-binding protein 60 A</fullName>
    </recommendedName>
</protein>
<organism evidence="8">
    <name type="scientific">Arabidopsis thaliana</name>
    <name type="common">Mouse-ear cress</name>
    <dbReference type="NCBI Taxonomy" id="3702"/>
    <lineage>
        <taxon>Eukaryota</taxon>
        <taxon>Viridiplantae</taxon>
        <taxon>Streptophyta</taxon>
        <taxon>Embryophyta</taxon>
        <taxon>Tracheophyta</taxon>
        <taxon>Spermatophyta</taxon>
        <taxon>Magnoliopsida</taxon>
        <taxon>eudicotyledons</taxon>
        <taxon>Gunneridae</taxon>
        <taxon>Pentapetalae</taxon>
        <taxon>rosids</taxon>
        <taxon>malvids</taxon>
        <taxon>Brassicales</taxon>
        <taxon>Brassicaceae</taxon>
        <taxon>Camelineae</taxon>
        <taxon>Arabidopsis</taxon>
    </lineage>
</organism>
<accession>C0SVV6</accession>
<accession>F4K6J3</accession>
<accession>Q8RWH0</accession>
<accession>Q9FJI9</accession>
<proteinExistence type="evidence at transcript level"/>
<feature type="chain" id="PRO_0000433045" description="Calmodulin-binding protein 60 A">
    <location>
        <begin position="1"/>
        <end position="494"/>
    </location>
</feature>
<feature type="region of interest" description="Calmodulin-binding" evidence="1">
    <location>
        <begin position="1"/>
        <end position="62"/>
    </location>
</feature>
<feature type="region of interest" description="DNA-binding" evidence="1">
    <location>
        <begin position="132"/>
        <end position="252"/>
    </location>
</feature>
<feature type="splice variant" id="VSP_057662" description="In isoform 2.">
    <location>
        <begin position="1"/>
        <end position="18"/>
    </location>
</feature>
<feature type="sequence conflict" description="In Ref. 4; AAM13096/AAM91175." evidence="5" ref="4">
    <original>G</original>
    <variation>V</variation>
    <location>
        <position position="239"/>
    </location>
</feature>
<feature type="sequence conflict" description="In Ref. 4; AAM13096/AAM91175." evidence="5" ref="4">
    <original>R</original>
    <variation>L</variation>
    <location>
        <position position="247"/>
    </location>
</feature>
<keyword id="KW-0010">Activator</keyword>
<keyword id="KW-0025">Alternative splicing</keyword>
<keyword id="KW-0112">Calmodulin-binding</keyword>
<keyword id="KW-0238">DNA-binding</keyword>
<keyword id="KW-0539">Nucleus</keyword>
<keyword id="KW-1185">Reference proteome</keyword>
<keyword id="KW-0804">Transcription</keyword>
<keyword id="KW-0805">Transcription regulation</keyword>
<sequence>MRIPTYDFGSKFSVVQEVMRLQTVKHFLEPVLEPLIRKVVKEEVELALGKHLAGIKWICEKETHPLESRNLQLKFLNNLSLPVFTSARIEGDEGQAIRVGLIDPSTGQIFSSGPASSAKLEVFVVEGDFNSVSDWTDEDIRNNIVREREGKKPLLNGNVFAVLNDGIGVMDEISFTDNSSWTRSRKFRLGVRIVDQFDYVKIREAITESFVVRDHRGELYKKHHPPSLFDEVWRLEKIGKDGAFHRRLNLSNINTVKDFLTHFHLNSSKLRQVLGTGMSSKMWEITLDHARSCVLDSSVHVYQAPGFQKKTAVVFNVVAQVLGLLVDFQYIPAEKLSEIEKAQAEVMVIDALSHLNEVISYDDEVSMMRNVLNAPASQGSVAGIDYSGLSLTSLDGYGFVSSLHNTAECSGKHSDDVDMEVTPHGLYEDYDNLWNCSHILGLEEPQSELQSALDDFMSQKNASVGGKAHSKRWTKLFSVSRWLSVFKYVKLGKI</sequence>